<protein>
    <recommendedName>
        <fullName evidence="1">Bifunctional uridylyltransferase/uridylyl-removing enzyme</fullName>
        <shortName evidence="1">UTase/UR</shortName>
    </recommendedName>
    <alternativeName>
        <fullName evidence="1">Bifunctional [protein-PII] modification enzyme</fullName>
    </alternativeName>
    <alternativeName>
        <fullName evidence="1">Bifunctional nitrogen sensor protein</fullName>
    </alternativeName>
    <domain>
        <recommendedName>
            <fullName evidence="1">[Protein-PII] uridylyltransferase</fullName>
            <shortName evidence="1">PII uridylyltransferase</shortName>
            <shortName evidence="1">UTase</shortName>
            <ecNumber evidence="1">2.7.7.59</ecNumber>
        </recommendedName>
    </domain>
    <domain>
        <recommendedName>
            <fullName evidence="1">[Protein-PII]-UMP uridylyl-removing enzyme</fullName>
            <shortName evidence="1">UR</shortName>
            <ecNumber evidence="1">3.1.4.-</ecNumber>
        </recommendedName>
    </domain>
</protein>
<gene>
    <name evidence="1" type="primary">glnD</name>
    <name type="ordered locus">Pput_4188</name>
</gene>
<keyword id="KW-0378">Hydrolase</keyword>
<keyword id="KW-0460">Magnesium</keyword>
<keyword id="KW-0511">Multifunctional enzyme</keyword>
<keyword id="KW-0548">Nucleotidyltransferase</keyword>
<keyword id="KW-0677">Repeat</keyword>
<keyword id="KW-0808">Transferase</keyword>
<sequence length="900" mass="102521">MPQVDPELFDRGQFQAELALKASPIAAFKKAIRLAGEVLDKRFSAGSDIRPLIEARAWLVDNILQQAWNQFDWGDQSGIALVAVGGYGRGELHPHSDIDLLILLGAAEHEQYRDAIERFLTLLWDIGLEVGQSVRTVDECAEQARADLTVITNLMESRTIAGPEALRQRMLEVTSTAHMWPSKEFFLAKRAELKARHHKYNDTEYNLEPNVKGSPGGLRDIQTVLWVARRQYGTLNLHALAGEGFLLESENELLASSQDFLWKVRYALHMLAGRAEDRLLFDHQRSIATLLGYSDENPKRAIEQFMQQYYRVVMSISQLCDLIIQHFEEVILADEESGSTQPLNARFRLHDGYIEAAHPNVFKRTPFAMLEIFVLMAQHPEIKGVRADTVRLLREHRHLIDDTFRTDIRNTSLFIELFKCEIGIHRNLRRMNRYGILGRYLPEFGLIVGQMQHDLFHIYTVDAHTLNLIKHLRKLQYTPVSEKFPLASKLMGRLPKPELIYLAGLYHDIGKGRQGDHSEIGAVDAQKFCERHQLPAWDSRLIVWLVQNHLVMSTTAQRKDLSDPQVINDFALHVGDETRLDYLYVLTVADINATNPSLWNSWRASLLRQLYTETKRALRRGLENPLDREEQIRQTQSSALDILVREGTDPDDVEQLWAQLGDDYFLKHTAADVAWHTDAILQQPADGGPLVLIKETTQREFEGGTQIFIYAPDQHDFFAVTVAAMSQLNLNIHDARIITSSSQFTLDTYIVLDNDGGSIGDNPQRVKQIRDGLTEALRNPEDYPTIIQRRVPRQLKHFDFPPQVTILNDAQRPVTILEITAPDRPGLLARLGRIFLEFDLSLQNAKIATLGERVEDVFFITDADNQPLSDPQLCSRLQEAIVQQLQAGQGSDTSQTRVTF</sequence>
<accession>A5W852</accession>
<dbReference type="EC" id="2.7.7.59" evidence="1"/>
<dbReference type="EC" id="3.1.4.-" evidence="1"/>
<dbReference type="EMBL" id="CP000712">
    <property type="protein sequence ID" value="ABQ80312.1"/>
    <property type="molecule type" value="Genomic_DNA"/>
</dbReference>
<dbReference type="SMR" id="A5W852"/>
<dbReference type="KEGG" id="ppf:Pput_4188"/>
<dbReference type="eggNOG" id="COG2844">
    <property type="taxonomic scope" value="Bacteria"/>
</dbReference>
<dbReference type="HOGENOM" id="CLU_012833_0_0_6"/>
<dbReference type="GO" id="GO:0008773">
    <property type="term" value="F:[protein-PII] uridylyltransferase activity"/>
    <property type="evidence" value="ECO:0007669"/>
    <property type="project" value="UniProtKB-UniRule"/>
</dbReference>
<dbReference type="GO" id="GO:0008081">
    <property type="term" value="F:phosphoric diester hydrolase activity"/>
    <property type="evidence" value="ECO:0007669"/>
    <property type="project" value="UniProtKB-UniRule"/>
</dbReference>
<dbReference type="GO" id="GO:0006808">
    <property type="term" value="P:regulation of nitrogen utilization"/>
    <property type="evidence" value="ECO:0007669"/>
    <property type="project" value="UniProtKB-UniRule"/>
</dbReference>
<dbReference type="CDD" id="cd04899">
    <property type="entry name" value="ACT_ACR-UUR-like_2"/>
    <property type="match status" value="1"/>
</dbReference>
<dbReference type="CDD" id="cd04900">
    <property type="entry name" value="ACT_UUR-like_1"/>
    <property type="match status" value="1"/>
</dbReference>
<dbReference type="CDD" id="cd00077">
    <property type="entry name" value="HDc"/>
    <property type="match status" value="1"/>
</dbReference>
<dbReference type="CDD" id="cd05401">
    <property type="entry name" value="NT_GlnE_GlnD_like"/>
    <property type="match status" value="1"/>
</dbReference>
<dbReference type="FunFam" id="1.10.3090.10:FF:000005">
    <property type="entry name" value="Bifunctional uridylyltransferase/uridylyl-removing enzyme"/>
    <property type="match status" value="1"/>
</dbReference>
<dbReference type="Gene3D" id="3.30.460.10">
    <property type="entry name" value="Beta Polymerase, domain 2"/>
    <property type="match status" value="1"/>
</dbReference>
<dbReference type="Gene3D" id="1.10.3090.10">
    <property type="entry name" value="cca-adding enzyme, domain 2"/>
    <property type="match status" value="1"/>
</dbReference>
<dbReference type="Gene3D" id="1.20.120.330">
    <property type="entry name" value="Nucleotidyltransferases domain 2"/>
    <property type="match status" value="1"/>
</dbReference>
<dbReference type="HAMAP" id="MF_00277">
    <property type="entry name" value="PII_uridylyl_transf"/>
    <property type="match status" value="1"/>
</dbReference>
<dbReference type="InterPro" id="IPR045865">
    <property type="entry name" value="ACT-like_dom_sf"/>
</dbReference>
<dbReference type="InterPro" id="IPR002912">
    <property type="entry name" value="ACT_dom"/>
</dbReference>
<dbReference type="InterPro" id="IPR003607">
    <property type="entry name" value="HD/PDEase_dom"/>
</dbReference>
<dbReference type="InterPro" id="IPR006674">
    <property type="entry name" value="HD_domain"/>
</dbReference>
<dbReference type="InterPro" id="IPR043519">
    <property type="entry name" value="NT_sf"/>
</dbReference>
<dbReference type="InterPro" id="IPR013546">
    <property type="entry name" value="PII_UdlTrfase/GS_AdlTrfase"/>
</dbReference>
<dbReference type="InterPro" id="IPR002934">
    <property type="entry name" value="Polymerase_NTP_transf_dom"/>
</dbReference>
<dbReference type="InterPro" id="IPR010043">
    <property type="entry name" value="UTase/UR"/>
</dbReference>
<dbReference type="NCBIfam" id="NF001366">
    <property type="entry name" value="PRK00275.1"/>
    <property type="match status" value="1"/>
</dbReference>
<dbReference type="NCBIfam" id="TIGR01693">
    <property type="entry name" value="UTase_glnD"/>
    <property type="match status" value="1"/>
</dbReference>
<dbReference type="PANTHER" id="PTHR47320">
    <property type="entry name" value="BIFUNCTIONAL URIDYLYLTRANSFERASE/URIDYLYL-REMOVING ENZYME"/>
    <property type="match status" value="1"/>
</dbReference>
<dbReference type="PANTHER" id="PTHR47320:SF1">
    <property type="entry name" value="BIFUNCTIONAL URIDYLYLTRANSFERASE_URIDYLYL-REMOVING ENZYME"/>
    <property type="match status" value="1"/>
</dbReference>
<dbReference type="Pfam" id="PF01842">
    <property type="entry name" value="ACT"/>
    <property type="match status" value="1"/>
</dbReference>
<dbReference type="Pfam" id="PF08335">
    <property type="entry name" value="GlnD_UR_UTase"/>
    <property type="match status" value="1"/>
</dbReference>
<dbReference type="Pfam" id="PF01966">
    <property type="entry name" value="HD"/>
    <property type="match status" value="1"/>
</dbReference>
<dbReference type="Pfam" id="PF01909">
    <property type="entry name" value="NTP_transf_2"/>
    <property type="match status" value="1"/>
</dbReference>
<dbReference type="PIRSF" id="PIRSF006288">
    <property type="entry name" value="PII_uridyltransf"/>
    <property type="match status" value="1"/>
</dbReference>
<dbReference type="SMART" id="SM00471">
    <property type="entry name" value="HDc"/>
    <property type="match status" value="1"/>
</dbReference>
<dbReference type="SUPFAM" id="SSF55021">
    <property type="entry name" value="ACT-like"/>
    <property type="match status" value="2"/>
</dbReference>
<dbReference type="SUPFAM" id="SSF109604">
    <property type="entry name" value="HD-domain/PDEase-like"/>
    <property type="match status" value="1"/>
</dbReference>
<dbReference type="SUPFAM" id="SSF81301">
    <property type="entry name" value="Nucleotidyltransferase"/>
    <property type="match status" value="1"/>
</dbReference>
<dbReference type="SUPFAM" id="SSF81593">
    <property type="entry name" value="Nucleotidyltransferase substrate binding subunit/domain"/>
    <property type="match status" value="1"/>
</dbReference>
<dbReference type="PROSITE" id="PS51671">
    <property type="entry name" value="ACT"/>
    <property type="match status" value="2"/>
</dbReference>
<dbReference type="PROSITE" id="PS51831">
    <property type="entry name" value="HD"/>
    <property type="match status" value="1"/>
</dbReference>
<comment type="function">
    <text evidence="1">Modifies, by uridylylation and deuridylylation, the PII regulatory proteins (GlnB and homologs), in response to the nitrogen status of the cell that GlnD senses through the glutamine level. Under low glutamine levels, catalyzes the conversion of the PII proteins and UTP to PII-UMP and PPi, while under higher glutamine levels, GlnD hydrolyzes PII-UMP to PII and UMP (deuridylylation). Thus, controls uridylylation state and activity of the PII proteins, and plays an important role in the regulation of nitrogen assimilation and metabolism.</text>
</comment>
<comment type="catalytic activity">
    <reaction evidence="1">
        <text>[protein-PII]-L-tyrosine + UTP = [protein-PII]-uridylyl-L-tyrosine + diphosphate</text>
        <dbReference type="Rhea" id="RHEA:13673"/>
        <dbReference type="Rhea" id="RHEA-COMP:12147"/>
        <dbReference type="Rhea" id="RHEA-COMP:12148"/>
        <dbReference type="ChEBI" id="CHEBI:33019"/>
        <dbReference type="ChEBI" id="CHEBI:46398"/>
        <dbReference type="ChEBI" id="CHEBI:46858"/>
        <dbReference type="ChEBI" id="CHEBI:90602"/>
        <dbReference type="EC" id="2.7.7.59"/>
    </reaction>
</comment>
<comment type="catalytic activity">
    <reaction evidence="1">
        <text>[protein-PII]-uridylyl-L-tyrosine + H2O = [protein-PII]-L-tyrosine + UMP + H(+)</text>
        <dbReference type="Rhea" id="RHEA:48600"/>
        <dbReference type="Rhea" id="RHEA-COMP:12147"/>
        <dbReference type="Rhea" id="RHEA-COMP:12148"/>
        <dbReference type="ChEBI" id="CHEBI:15377"/>
        <dbReference type="ChEBI" id="CHEBI:15378"/>
        <dbReference type="ChEBI" id="CHEBI:46858"/>
        <dbReference type="ChEBI" id="CHEBI:57865"/>
        <dbReference type="ChEBI" id="CHEBI:90602"/>
    </reaction>
</comment>
<comment type="cofactor">
    <cofactor evidence="1">
        <name>Mg(2+)</name>
        <dbReference type="ChEBI" id="CHEBI:18420"/>
    </cofactor>
</comment>
<comment type="activity regulation">
    <text evidence="1">Uridylyltransferase (UTase) activity is inhibited by glutamine, while glutamine activates uridylyl-removing (UR) activity.</text>
</comment>
<comment type="domain">
    <text evidence="1">Has four distinct domains: an N-terminal nucleotidyltransferase (NT) domain responsible for UTase activity, a central HD domain that encodes UR activity, and two C-terminal ACT domains that seem to have a role in glutamine sensing.</text>
</comment>
<comment type="similarity">
    <text evidence="1">Belongs to the GlnD family.</text>
</comment>
<feature type="chain" id="PRO_1000059225" description="Bifunctional uridylyltransferase/uridylyl-removing enzyme">
    <location>
        <begin position="1"/>
        <end position="900"/>
    </location>
</feature>
<feature type="domain" description="HD" evidence="2">
    <location>
        <begin position="461"/>
        <end position="583"/>
    </location>
</feature>
<feature type="domain" description="ACT 1" evidence="1">
    <location>
        <begin position="706"/>
        <end position="784"/>
    </location>
</feature>
<feature type="domain" description="ACT 2" evidence="1">
    <location>
        <begin position="816"/>
        <end position="900"/>
    </location>
</feature>
<feature type="region of interest" description="Uridylyltransferase">
    <location>
        <begin position="1"/>
        <end position="342"/>
    </location>
</feature>
<feature type="region of interest" description="Uridylyl-removing">
    <location>
        <begin position="343"/>
        <end position="705"/>
    </location>
</feature>
<proteinExistence type="inferred from homology"/>
<evidence type="ECO:0000255" key="1">
    <source>
        <dbReference type="HAMAP-Rule" id="MF_00277"/>
    </source>
</evidence>
<evidence type="ECO:0000255" key="2">
    <source>
        <dbReference type="PROSITE-ProRule" id="PRU01175"/>
    </source>
</evidence>
<name>GLND_PSEP1</name>
<reference key="1">
    <citation type="submission" date="2007-05" db="EMBL/GenBank/DDBJ databases">
        <title>Complete sequence of Pseudomonas putida F1.</title>
        <authorList>
            <consortium name="US DOE Joint Genome Institute"/>
            <person name="Copeland A."/>
            <person name="Lucas S."/>
            <person name="Lapidus A."/>
            <person name="Barry K."/>
            <person name="Detter J.C."/>
            <person name="Glavina del Rio T."/>
            <person name="Hammon N."/>
            <person name="Israni S."/>
            <person name="Dalin E."/>
            <person name="Tice H."/>
            <person name="Pitluck S."/>
            <person name="Chain P."/>
            <person name="Malfatti S."/>
            <person name="Shin M."/>
            <person name="Vergez L."/>
            <person name="Schmutz J."/>
            <person name="Larimer F."/>
            <person name="Land M."/>
            <person name="Hauser L."/>
            <person name="Kyrpides N."/>
            <person name="Lykidis A."/>
            <person name="Parales R."/>
            <person name="Richardson P."/>
        </authorList>
    </citation>
    <scope>NUCLEOTIDE SEQUENCE [LARGE SCALE GENOMIC DNA]</scope>
    <source>
        <strain>ATCC 700007 / DSM 6899 / JCM 31910 / BCRC 17059 / LMG 24140 / F1</strain>
    </source>
</reference>
<organism>
    <name type="scientific">Pseudomonas putida (strain ATCC 700007 / DSM 6899 / JCM 31910 / BCRC 17059 / LMG 24140 / F1)</name>
    <dbReference type="NCBI Taxonomy" id="351746"/>
    <lineage>
        <taxon>Bacteria</taxon>
        <taxon>Pseudomonadati</taxon>
        <taxon>Pseudomonadota</taxon>
        <taxon>Gammaproteobacteria</taxon>
        <taxon>Pseudomonadales</taxon>
        <taxon>Pseudomonadaceae</taxon>
        <taxon>Pseudomonas</taxon>
    </lineage>
</organism>